<gene>
    <name type="primary">wtpC</name>
    <name type="ordered locus">TK0021</name>
</gene>
<keyword id="KW-0067">ATP-binding</keyword>
<keyword id="KW-1003">Cell membrane</keyword>
<keyword id="KW-0472">Membrane</keyword>
<keyword id="KW-0500">Molybdenum</keyword>
<keyword id="KW-0547">Nucleotide-binding</keyword>
<keyword id="KW-1185">Reference proteome</keyword>
<keyword id="KW-1278">Translocase</keyword>
<keyword id="KW-0813">Transport</keyword>
<protein>
    <recommendedName>
        <fullName>Molybdate/tungstate import ATP-binding protein WtpC</fullName>
        <ecNumber evidence="2">7.3.2.6</ecNumber>
    </recommendedName>
</protein>
<comment type="function">
    <text evidence="2">Part of the ABC transporter complex WtpABC involved in molybdate/tungstate import. Responsible for energy coupling to the transport system.</text>
</comment>
<comment type="catalytic activity">
    <reaction evidence="2">
        <text>tungstate(in) + ATP + H2O = tungstate(out) + ADP + phosphate + H(+)</text>
        <dbReference type="Rhea" id="RHEA:35027"/>
        <dbReference type="ChEBI" id="CHEBI:15377"/>
        <dbReference type="ChEBI" id="CHEBI:15378"/>
        <dbReference type="ChEBI" id="CHEBI:30616"/>
        <dbReference type="ChEBI" id="CHEBI:43474"/>
        <dbReference type="ChEBI" id="CHEBI:46502"/>
        <dbReference type="ChEBI" id="CHEBI:456216"/>
        <dbReference type="EC" id="7.3.2.6"/>
    </reaction>
</comment>
<comment type="subunit">
    <text evidence="1">The complex is composed of two ATP-binding proteins (WtpC), two transmembrane proteins (WtpB) and a solute-binding protein (WtpA).</text>
</comment>
<comment type="subcellular location">
    <subcellularLocation>
        <location evidence="1">Cell membrane</location>
        <topology evidence="1">Peripheral membrane protein</topology>
    </subcellularLocation>
</comment>
<comment type="similarity">
    <text evidence="4">Belongs to the ABC transporter superfamily. Sulfate/tungstate importer (TC 3.A.1.6) family.</text>
</comment>
<reference key="1">
    <citation type="journal article" date="2005" name="Genome Res.">
        <title>Complete genome sequence of the hyperthermophilic archaeon Thermococcus kodakaraensis KOD1 and comparison with Pyrococcus genomes.</title>
        <authorList>
            <person name="Fukui T."/>
            <person name="Atomi H."/>
            <person name="Kanai T."/>
            <person name="Matsumi R."/>
            <person name="Fujiwara S."/>
            <person name="Imanaka T."/>
        </authorList>
    </citation>
    <scope>NUCLEOTIDE SEQUENCE [LARGE SCALE GENOMIC DNA]</scope>
    <source>
        <strain>ATCC BAA-918 / JCM 12380 / KOD1</strain>
    </source>
</reference>
<feature type="chain" id="PRO_0000338505" description="Molybdate/tungstate import ATP-binding protein WtpC">
    <location>
        <begin position="1"/>
        <end position="330"/>
    </location>
</feature>
<feature type="domain" description="ABC transporter" evidence="3">
    <location>
        <begin position="3"/>
        <end position="232"/>
    </location>
</feature>
<feature type="binding site" evidence="3">
    <location>
        <begin position="34"/>
        <end position="41"/>
    </location>
    <ligand>
        <name>ATP</name>
        <dbReference type="ChEBI" id="CHEBI:30616"/>
    </ligand>
</feature>
<proteinExistence type="inferred from homology"/>
<sequence length="330" mass="36445">MVLMVEGISKDYREFHLRDVTFSVEKGEHFIILGPSGAGKTVLLEVIAGIIEPDSGRIFLNGEDITDLPPEKRGLAYIPQNYALFPNMSVFDNIAFGLKVRKVPKAEIGRKVRELSEVLGISHLLKRKPKTLSGGEMQRVAIARALAVEPELLLLDEPFANLDVQTRGRLINEMKRWRKELGFTALHVTHSFEEAVSLGDRVGVMLNGRLVQVGPVREVFSRPASEEVAKFLGFENIVEGLAEGRILRANGLVIELPIEASGRIRVGIRPEDIVLSDEPLKSSMRNTFQAEVQADVEELGELGPRTRKAKGRWSGAFSIRYPLFGAGAGA</sequence>
<accession>Q5JEB0</accession>
<dbReference type="EC" id="7.3.2.6" evidence="2"/>
<dbReference type="EMBL" id="AP006878">
    <property type="protein sequence ID" value="BAD84210.1"/>
    <property type="molecule type" value="Genomic_DNA"/>
</dbReference>
<dbReference type="SMR" id="Q5JEB0"/>
<dbReference type="FunCoup" id="Q5JEB0">
    <property type="interactions" value="43"/>
</dbReference>
<dbReference type="STRING" id="69014.TK0021"/>
<dbReference type="EnsemblBacteria" id="BAD84210">
    <property type="protein sequence ID" value="BAD84210"/>
    <property type="gene ID" value="TK0021"/>
</dbReference>
<dbReference type="KEGG" id="tko:TK0021"/>
<dbReference type="PATRIC" id="fig|69014.16.peg.21"/>
<dbReference type="eggNOG" id="arCOG00175">
    <property type="taxonomic scope" value="Archaea"/>
</dbReference>
<dbReference type="HOGENOM" id="CLU_000604_1_1_2"/>
<dbReference type="InParanoid" id="Q5JEB0"/>
<dbReference type="PhylomeDB" id="Q5JEB0"/>
<dbReference type="Proteomes" id="UP000000536">
    <property type="component" value="Chromosome"/>
</dbReference>
<dbReference type="GO" id="GO:0005886">
    <property type="term" value="C:plasma membrane"/>
    <property type="evidence" value="ECO:0007669"/>
    <property type="project" value="UniProtKB-SubCell"/>
</dbReference>
<dbReference type="GO" id="GO:1901238">
    <property type="term" value="F:ABC-type tungstate transporter activity"/>
    <property type="evidence" value="ECO:0007669"/>
    <property type="project" value="UniProtKB-EC"/>
</dbReference>
<dbReference type="GO" id="GO:0005524">
    <property type="term" value="F:ATP binding"/>
    <property type="evidence" value="ECO:0007669"/>
    <property type="project" value="UniProtKB-KW"/>
</dbReference>
<dbReference type="GO" id="GO:0016887">
    <property type="term" value="F:ATP hydrolysis activity"/>
    <property type="evidence" value="ECO:0007669"/>
    <property type="project" value="InterPro"/>
</dbReference>
<dbReference type="CDD" id="cd03299">
    <property type="entry name" value="ABC_ModC_like"/>
    <property type="match status" value="1"/>
</dbReference>
<dbReference type="FunFam" id="3.40.50.300:FF:000425">
    <property type="entry name" value="Probable ABC transporter, ATP-binding subunit"/>
    <property type="match status" value="1"/>
</dbReference>
<dbReference type="Gene3D" id="3.40.50.300">
    <property type="entry name" value="P-loop containing nucleotide triphosphate hydrolases"/>
    <property type="match status" value="1"/>
</dbReference>
<dbReference type="InterPro" id="IPR003593">
    <property type="entry name" value="AAA+_ATPase"/>
</dbReference>
<dbReference type="InterPro" id="IPR050093">
    <property type="entry name" value="ABC_SmlMolc_Importer"/>
</dbReference>
<dbReference type="InterPro" id="IPR003439">
    <property type="entry name" value="ABC_transporter-like_ATP-bd"/>
</dbReference>
<dbReference type="InterPro" id="IPR017871">
    <property type="entry name" value="ABC_transporter-like_CS"/>
</dbReference>
<dbReference type="InterPro" id="IPR008995">
    <property type="entry name" value="Mo/tungstate-bd_C_term_dom"/>
</dbReference>
<dbReference type="InterPro" id="IPR053428">
    <property type="entry name" value="Molybdate/tungstate_ABC-ATPase"/>
</dbReference>
<dbReference type="InterPro" id="IPR027417">
    <property type="entry name" value="P-loop_NTPase"/>
</dbReference>
<dbReference type="NCBIfam" id="NF040840">
    <property type="entry name" value="tungstate_WtpC"/>
    <property type="match status" value="1"/>
</dbReference>
<dbReference type="PANTHER" id="PTHR42781">
    <property type="entry name" value="SPERMIDINE/PUTRESCINE IMPORT ATP-BINDING PROTEIN POTA"/>
    <property type="match status" value="1"/>
</dbReference>
<dbReference type="PANTHER" id="PTHR42781:SF4">
    <property type="entry name" value="SPERMIDINE_PUTRESCINE IMPORT ATP-BINDING PROTEIN POTA"/>
    <property type="match status" value="1"/>
</dbReference>
<dbReference type="Pfam" id="PF00005">
    <property type="entry name" value="ABC_tran"/>
    <property type="match status" value="1"/>
</dbReference>
<dbReference type="SMART" id="SM00382">
    <property type="entry name" value="AAA"/>
    <property type="match status" value="1"/>
</dbReference>
<dbReference type="SUPFAM" id="SSF50331">
    <property type="entry name" value="MOP-like"/>
    <property type="match status" value="1"/>
</dbReference>
<dbReference type="SUPFAM" id="SSF52540">
    <property type="entry name" value="P-loop containing nucleoside triphosphate hydrolases"/>
    <property type="match status" value="1"/>
</dbReference>
<dbReference type="PROSITE" id="PS00211">
    <property type="entry name" value="ABC_TRANSPORTER_1"/>
    <property type="match status" value="1"/>
</dbReference>
<dbReference type="PROSITE" id="PS50893">
    <property type="entry name" value="ABC_TRANSPORTER_2"/>
    <property type="match status" value="1"/>
</dbReference>
<name>WTPC_THEKO</name>
<evidence type="ECO:0000250" key="1"/>
<evidence type="ECO:0000250" key="2">
    <source>
        <dbReference type="UniProtKB" id="Q8U4K3"/>
    </source>
</evidence>
<evidence type="ECO:0000255" key="3">
    <source>
        <dbReference type="PROSITE-ProRule" id="PRU00434"/>
    </source>
</evidence>
<evidence type="ECO:0000305" key="4"/>
<organism>
    <name type="scientific">Thermococcus kodakarensis (strain ATCC BAA-918 / JCM 12380 / KOD1)</name>
    <name type="common">Pyrococcus kodakaraensis (strain KOD1)</name>
    <dbReference type="NCBI Taxonomy" id="69014"/>
    <lineage>
        <taxon>Archaea</taxon>
        <taxon>Methanobacteriati</taxon>
        <taxon>Methanobacteriota</taxon>
        <taxon>Thermococci</taxon>
        <taxon>Thermococcales</taxon>
        <taxon>Thermococcaceae</taxon>
        <taxon>Thermococcus</taxon>
    </lineage>
</organism>